<keyword id="KW-1003">Cell membrane</keyword>
<keyword id="KW-0406">Ion transport</keyword>
<keyword id="KW-0460">Magnesium</keyword>
<keyword id="KW-0472">Membrane</keyword>
<keyword id="KW-0630">Potassium</keyword>
<keyword id="KW-0915">Sodium</keyword>
<keyword id="KW-0739">Sodium transport</keyword>
<keyword id="KW-1278">Translocase</keyword>
<keyword id="KW-0812">Transmembrane</keyword>
<keyword id="KW-1133">Transmembrane helix</keyword>
<keyword id="KW-0813">Transport</keyword>
<evidence type="ECO:0000250" key="1"/>
<evidence type="ECO:0000255" key="2"/>
<evidence type="ECO:0000305" key="3"/>
<name>HPPA_HELCL</name>
<sequence length="197" mass="20230">AGGIAEMAELGPEVRKKTDKLDAVGNTTAAVAKGFAIGSAALTALALFTAFAEEVVKSPGVSSALHGSHFVLNLLEPKIIIGLFIGGTVPFLFCAFAMEAVGKAAFEMIGEVRRQFREIPGLMEGKAKPDYARCVDISTRAAIRQMIAPGLLAVITPLIVGFGFGAQALGGMLAGVTVAGVLLAIFMANAGGAWDHA</sequence>
<reference key="1">
    <citation type="submission" date="1999-12" db="EMBL/GenBank/DDBJ databases">
        <title>Evidence for a wide distribution of proton-translocating pyrophosphatases among photosynthetic organisms.</title>
        <authorList>
            <person name="Perez-Castineira J.R."/>
            <person name="Losada M."/>
            <person name="Serrano A."/>
        </authorList>
    </citation>
    <scope>NUCLEOTIDE SEQUENCE [GENOMIC DNA]</scope>
    <source>
        <strain>ATCC 35205 / DSM 3682 / Gest/Favinger</strain>
    </source>
</reference>
<gene>
    <name type="primary">hppA</name>
    <name type="synonym">vppA</name>
</gene>
<protein>
    <recommendedName>
        <fullName>Putative K(+)-stimulated pyrophosphate-energized sodium pump</fullName>
        <ecNumber>7.2.3.1</ecNumber>
    </recommendedName>
    <alternativeName>
        <fullName>Membrane-bound sodium-translocating pyrophosphatase</fullName>
    </alternativeName>
    <alternativeName>
        <fullName>Pyrophosphate-energized inorganic pyrophosphatase</fullName>
        <shortName>Na(+)-PPase</shortName>
    </alternativeName>
</protein>
<dbReference type="EC" id="7.2.3.1"/>
<dbReference type="EMBL" id="AJ251371">
    <property type="protein sequence ID" value="CAC80906.1"/>
    <property type="molecule type" value="Genomic_DNA"/>
</dbReference>
<dbReference type="SMR" id="Q8VNJ8"/>
<dbReference type="GO" id="GO:0005886">
    <property type="term" value="C:plasma membrane"/>
    <property type="evidence" value="ECO:0007669"/>
    <property type="project" value="UniProtKB-SubCell"/>
</dbReference>
<dbReference type="GO" id="GO:0009678">
    <property type="term" value="F:diphosphate hydrolysis-driven proton transmembrane transporter activity"/>
    <property type="evidence" value="ECO:0007669"/>
    <property type="project" value="InterPro"/>
</dbReference>
<dbReference type="GO" id="GO:0004427">
    <property type="term" value="F:inorganic diphosphate phosphatase activity"/>
    <property type="evidence" value="ECO:0007669"/>
    <property type="project" value="InterPro"/>
</dbReference>
<dbReference type="GO" id="GO:0006814">
    <property type="term" value="P:sodium ion transport"/>
    <property type="evidence" value="ECO:0007669"/>
    <property type="project" value="UniProtKB-KW"/>
</dbReference>
<dbReference type="InterPro" id="IPR004131">
    <property type="entry name" value="PPase-energised_H-pump"/>
</dbReference>
<dbReference type="PANTHER" id="PTHR31998">
    <property type="entry name" value="K(+)-INSENSITIVE PYROPHOSPHATE-ENERGIZED PROTON PUMP"/>
    <property type="match status" value="1"/>
</dbReference>
<dbReference type="Pfam" id="PF03030">
    <property type="entry name" value="H_PPase"/>
    <property type="match status" value="1"/>
</dbReference>
<proteinExistence type="inferred from homology"/>
<feature type="chain" id="PRO_0000217004" description="Putative K(+)-stimulated pyrophosphate-energized sodium pump">
    <location>
        <begin position="1" status="less than"/>
        <end position="197" status="greater than"/>
    </location>
</feature>
<feature type="transmembrane region" description="Helical" evidence="2">
    <location>
        <begin position="31"/>
        <end position="51"/>
    </location>
</feature>
<feature type="transmembrane region" description="Helical" evidence="2">
    <location>
        <begin position="79"/>
        <end position="99"/>
    </location>
</feature>
<feature type="transmembrane region" description="Helical" evidence="2">
    <location>
        <begin position="146"/>
        <end position="166"/>
    </location>
</feature>
<feature type="transmembrane region" description="Helical" evidence="2">
    <location>
        <begin position="168"/>
        <end position="188"/>
    </location>
</feature>
<feature type="site" description="Determinant of potassium dependence" evidence="1">
    <location>
        <position position="29"/>
    </location>
</feature>
<feature type="non-terminal residue">
    <location>
        <position position="1"/>
    </location>
</feature>
<feature type="non-terminal residue">
    <location>
        <position position="197"/>
    </location>
</feature>
<comment type="function">
    <text evidence="1">Sodium pump that utilizes the energy of pyrophosphate hydrolysis as the driving force for Na(+) movement across the membrane.</text>
</comment>
<comment type="catalytic activity">
    <reaction>
        <text>Na(+)(in) + diphosphate + H2O = Na(+)(out) + 2 phosphate + H(+)</text>
        <dbReference type="Rhea" id="RHEA:57884"/>
        <dbReference type="ChEBI" id="CHEBI:15377"/>
        <dbReference type="ChEBI" id="CHEBI:15378"/>
        <dbReference type="ChEBI" id="CHEBI:29101"/>
        <dbReference type="ChEBI" id="CHEBI:33019"/>
        <dbReference type="ChEBI" id="CHEBI:43474"/>
        <dbReference type="EC" id="7.2.3.1"/>
    </reaction>
</comment>
<comment type="cofactor">
    <cofactor evidence="1">
        <name>Mg(2+)</name>
        <dbReference type="ChEBI" id="CHEBI:18420"/>
    </cofactor>
</comment>
<comment type="activity regulation">
    <text evidence="1">Requires K(+) for maximal activity.</text>
</comment>
<comment type="subunit">
    <text evidence="1">Homodimer.</text>
</comment>
<comment type="subcellular location">
    <subcellularLocation>
        <location evidence="1">Cell membrane</location>
        <topology evidence="1">Multi-pass membrane protein</topology>
    </subcellularLocation>
</comment>
<comment type="similarity">
    <text evidence="3">Belongs to the H(+)-translocating pyrophosphatase (TC 3.A.10) family. K(+)-stimulated subfamily.</text>
</comment>
<accession>Q8VNJ8</accession>
<organism>
    <name type="scientific">Heliobacterium chlorum</name>
    <dbReference type="NCBI Taxonomy" id="2698"/>
    <lineage>
        <taxon>Bacteria</taxon>
        <taxon>Bacillati</taxon>
        <taxon>Bacillota</taxon>
        <taxon>Clostridia</taxon>
        <taxon>Eubacteriales</taxon>
        <taxon>Heliobacteriaceae</taxon>
        <taxon>Heliobacterium</taxon>
    </lineage>
</organism>